<reference key="1">
    <citation type="journal article" date="2005" name="Science">
        <title>The transcriptional landscape of the mammalian genome.</title>
        <authorList>
            <person name="Carninci P."/>
            <person name="Kasukawa T."/>
            <person name="Katayama S."/>
            <person name="Gough J."/>
            <person name="Frith M.C."/>
            <person name="Maeda N."/>
            <person name="Oyama R."/>
            <person name="Ravasi T."/>
            <person name="Lenhard B."/>
            <person name="Wells C."/>
            <person name="Kodzius R."/>
            <person name="Shimokawa K."/>
            <person name="Bajic V.B."/>
            <person name="Brenner S.E."/>
            <person name="Batalov S."/>
            <person name="Forrest A.R."/>
            <person name="Zavolan M."/>
            <person name="Davis M.J."/>
            <person name="Wilming L.G."/>
            <person name="Aidinis V."/>
            <person name="Allen J.E."/>
            <person name="Ambesi-Impiombato A."/>
            <person name="Apweiler R."/>
            <person name="Aturaliya R.N."/>
            <person name="Bailey T.L."/>
            <person name="Bansal M."/>
            <person name="Baxter L."/>
            <person name="Beisel K.W."/>
            <person name="Bersano T."/>
            <person name="Bono H."/>
            <person name="Chalk A.M."/>
            <person name="Chiu K.P."/>
            <person name="Choudhary V."/>
            <person name="Christoffels A."/>
            <person name="Clutterbuck D.R."/>
            <person name="Crowe M.L."/>
            <person name="Dalla E."/>
            <person name="Dalrymple B.P."/>
            <person name="de Bono B."/>
            <person name="Della Gatta G."/>
            <person name="di Bernardo D."/>
            <person name="Down T."/>
            <person name="Engstrom P."/>
            <person name="Fagiolini M."/>
            <person name="Faulkner G."/>
            <person name="Fletcher C.F."/>
            <person name="Fukushima T."/>
            <person name="Furuno M."/>
            <person name="Futaki S."/>
            <person name="Gariboldi M."/>
            <person name="Georgii-Hemming P."/>
            <person name="Gingeras T.R."/>
            <person name="Gojobori T."/>
            <person name="Green R.E."/>
            <person name="Gustincich S."/>
            <person name="Harbers M."/>
            <person name="Hayashi Y."/>
            <person name="Hensch T.K."/>
            <person name="Hirokawa N."/>
            <person name="Hill D."/>
            <person name="Huminiecki L."/>
            <person name="Iacono M."/>
            <person name="Ikeo K."/>
            <person name="Iwama A."/>
            <person name="Ishikawa T."/>
            <person name="Jakt M."/>
            <person name="Kanapin A."/>
            <person name="Katoh M."/>
            <person name="Kawasawa Y."/>
            <person name="Kelso J."/>
            <person name="Kitamura H."/>
            <person name="Kitano H."/>
            <person name="Kollias G."/>
            <person name="Krishnan S.P."/>
            <person name="Kruger A."/>
            <person name="Kummerfeld S.K."/>
            <person name="Kurochkin I.V."/>
            <person name="Lareau L.F."/>
            <person name="Lazarevic D."/>
            <person name="Lipovich L."/>
            <person name="Liu J."/>
            <person name="Liuni S."/>
            <person name="McWilliam S."/>
            <person name="Madan Babu M."/>
            <person name="Madera M."/>
            <person name="Marchionni L."/>
            <person name="Matsuda H."/>
            <person name="Matsuzawa S."/>
            <person name="Miki H."/>
            <person name="Mignone F."/>
            <person name="Miyake S."/>
            <person name="Morris K."/>
            <person name="Mottagui-Tabar S."/>
            <person name="Mulder N."/>
            <person name="Nakano N."/>
            <person name="Nakauchi H."/>
            <person name="Ng P."/>
            <person name="Nilsson R."/>
            <person name="Nishiguchi S."/>
            <person name="Nishikawa S."/>
            <person name="Nori F."/>
            <person name="Ohara O."/>
            <person name="Okazaki Y."/>
            <person name="Orlando V."/>
            <person name="Pang K.C."/>
            <person name="Pavan W.J."/>
            <person name="Pavesi G."/>
            <person name="Pesole G."/>
            <person name="Petrovsky N."/>
            <person name="Piazza S."/>
            <person name="Reed J."/>
            <person name="Reid J.F."/>
            <person name="Ring B.Z."/>
            <person name="Ringwald M."/>
            <person name="Rost B."/>
            <person name="Ruan Y."/>
            <person name="Salzberg S.L."/>
            <person name="Sandelin A."/>
            <person name="Schneider C."/>
            <person name="Schoenbach C."/>
            <person name="Sekiguchi K."/>
            <person name="Semple C.A."/>
            <person name="Seno S."/>
            <person name="Sessa L."/>
            <person name="Sheng Y."/>
            <person name="Shibata Y."/>
            <person name="Shimada H."/>
            <person name="Shimada K."/>
            <person name="Silva D."/>
            <person name="Sinclair B."/>
            <person name="Sperling S."/>
            <person name="Stupka E."/>
            <person name="Sugiura K."/>
            <person name="Sultana R."/>
            <person name="Takenaka Y."/>
            <person name="Taki K."/>
            <person name="Tammoja K."/>
            <person name="Tan S.L."/>
            <person name="Tang S."/>
            <person name="Taylor M.S."/>
            <person name="Tegner J."/>
            <person name="Teichmann S.A."/>
            <person name="Ueda H.R."/>
            <person name="van Nimwegen E."/>
            <person name="Verardo R."/>
            <person name="Wei C.L."/>
            <person name="Yagi K."/>
            <person name="Yamanishi H."/>
            <person name="Zabarovsky E."/>
            <person name="Zhu S."/>
            <person name="Zimmer A."/>
            <person name="Hide W."/>
            <person name="Bult C."/>
            <person name="Grimmond S.M."/>
            <person name="Teasdale R.D."/>
            <person name="Liu E.T."/>
            <person name="Brusic V."/>
            <person name="Quackenbush J."/>
            <person name="Wahlestedt C."/>
            <person name="Mattick J.S."/>
            <person name="Hume D.A."/>
            <person name="Kai C."/>
            <person name="Sasaki D."/>
            <person name="Tomaru Y."/>
            <person name="Fukuda S."/>
            <person name="Kanamori-Katayama M."/>
            <person name="Suzuki M."/>
            <person name="Aoki J."/>
            <person name="Arakawa T."/>
            <person name="Iida J."/>
            <person name="Imamura K."/>
            <person name="Itoh M."/>
            <person name="Kato T."/>
            <person name="Kawaji H."/>
            <person name="Kawagashira N."/>
            <person name="Kawashima T."/>
            <person name="Kojima M."/>
            <person name="Kondo S."/>
            <person name="Konno H."/>
            <person name="Nakano K."/>
            <person name="Ninomiya N."/>
            <person name="Nishio T."/>
            <person name="Okada M."/>
            <person name="Plessy C."/>
            <person name="Shibata K."/>
            <person name="Shiraki T."/>
            <person name="Suzuki S."/>
            <person name="Tagami M."/>
            <person name="Waki K."/>
            <person name="Watahiki A."/>
            <person name="Okamura-Oho Y."/>
            <person name="Suzuki H."/>
            <person name="Kawai J."/>
            <person name="Hayashizaki Y."/>
        </authorList>
    </citation>
    <scope>NUCLEOTIDE SEQUENCE [LARGE SCALE MRNA]</scope>
    <source>
        <strain>C57BL/6J</strain>
        <tissue>Aorta</tissue>
        <tissue>Vein</tissue>
    </source>
</reference>
<reference key="2">
    <citation type="journal article" date="2004" name="Genome Res.">
        <title>The status, quality, and expansion of the NIH full-length cDNA project: the Mammalian Gene Collection (MGC).</title>
        <authorList>
            <consortium name="The MGC Project Team"/>
        </authorList>
    </citation>
    <scope>NUCLEOTIDE SEQUENCE [LARGE SCALE MRNA]</scope>
    <source>
        <strain>FVB/N</strain>
        <tissue>Liver</tissue>
    </source>
</reference>
<reference key="3">
    <citation type="journal article" date="2010" name="Cell">
        <title>A tissue-specific atlas of mouse protein phosphorylation and expression.</title>
        <authorList>
            <person name="Huttlin E.L."/>
            <person name="Jedrychowski M.P."/>
            <person name="Elias J.E."/>
            <person name="Goswami T."/>
            <person name="Rad R."/>
            <person name="Beausoleil S.A."/>
            <person name="Villen J."/>
            <person name="Haas W."/>
            <person name="Sowa M.E."/>
            <person name="Gygi S.P."/>
        </authorList>
    </citation>
    <scope>IDENTIFICATION BY MASS SPECTROMETRY [LARGE SCALE ANALYSIS]</scope>
    <source>
        <tissue>Brown adipose tissue</tissue>
        <tissue>Heart</tissue>
        <tissue>Kidney</tissue>
        <tissue>Liver</tissue>
        <tissue>Lung</tissue>
        <tissue>Pancreas</tissue>
        <tissue>Spleen</tissue>
        <tissue>Testis</tissue>
    </source>
</reference>
<proteinExistence type="evidence at protein level"/>
<dbReference type="EC" id="5.1.3.3" evidence="1"/>
<dbReference type="EMBL" id="AK040998">
    <property type="protein sequence ID" value="BAC30776.1"/>
    <property type="molecule type" value="mRNA"/>
</dbReference>
<dbReference type="EMBL" id="BC028818">
    <property type="protein sequence ID" value="AAH28818.1"/>
    <property type="molecule type" value="mRNA"/>
</dbReference>
<dbReference type="CCDS" id="CCDS28987.1"/>
<dbReference type="RefSeq" id="NP_795937.1">
    <property type="nucleotide sequence ID" value="NM_176963.4"/>
</dbReference>
<dbReference type="SMR" id="Q8K157"/>
<dbReference type="FunCoup" id="Q8K157">
    <property type="interactions" value="380"/>
</dbReference>
<dbReference type="STRING" id="10090.ENSMUSP00000040580"/>
<dbReference type="GlyGen" id="Q8K157">
    <property type="glycosylation" value="2 sites, 1 N-linked glycan (1 site), 1 O-linked glycan (1 site)"/>
</dbReference>
<dbReference type="iPTMnet" id="Q8K157"/>
<dbReference type="PhosphoSitePlus" id="Q8K157"/>
<dbReference type="REPRODUCTION-2DPAGE" id="Q8K157"/>
<dbReference type="jPOST" id="Q8K157"/>
<dbReference type="PaxDb" id="10090-ENSMUSP00000040580"/>
<dbReference type="PeptideAtlas" id="Q8K157"/>
<dbReference type="ProteomicsDB" id="267418"/>
<dbReference type="Pumba" id="Q8K157"/>
<dbReference type="Antibodypedia" id="29513">
    <property type="antibodies" value="217 antibodies from 26 providers"/>
</dbReference>
<dbReference type="Ensembl" id="ENSMUST00000039205.11">
    <property type="protein sequence ID" value="ENSMUSP00000040580.5"/>
    <property type="gene ID" value="ENSMUSG00000035473.11"/>
</dbReference>
<dbReference type="GeneID" id="319625"/>
<dbReference type="KEGG" id="mmu:319625"/>
<dbReference type="UCSC" id="uc008dqo.1">
    <property type="organism name" value="mouse"/>
</dbReference>
<dbReference type="AGR" id="MGI:2442420"/>
<dbReference type="CTD" id="130589"/>
<dbReference type="MGI" id="MGI:2442420">
    <property type="gene designation" value="Galm"/>
</dbReference>
<dbReference type="VEuPathDB" id="HostDB:ENSMUSG00000035473"/>
<dbReference type="eggNOG" id="KOG1604">
    <property type="taxonomic scope" value="Eukaryota"/>
</dbReference>
<dbReference type="GeneTree" id="ENSGT00510000047589"/>
<dbReference type="HOGENOM" id="CLU_031753_2_0_1"/>
<dbReference type="InParanoid" id="Q8K157"/>
<dbReference type="OMA" id="IYHHISR"/>
<dbReference type="OrthoDB" id="274691at2759"/>
<dbReference type="PhylomeDB" id="Q8K157"/>
<dbReference type="TreeFam" id="TF324207"/>
<dbReference type="UniPathway" id="UPA00214"/>
<dbReference type="UniPathway" id="UPA00242"/>
<dbReference type="BioGRID-ORCS" id="319625">
    <property type="hits" value="0 hits in 78 CRISPR screens"/>
</dbReference>
<dbReference type="ChiTaRS" id="Galm">
    <property type="organism name" value="mouse"/>
</dbReference>
<dbReference type="PRO" id="PR:Q8K157"/>
<dbReference type="Proteomes" id="UP000000589">
    <property type="component" value="Chromosome 17"/>
</dbReference>
<dbReference type="RNAct" id="Q8K157">
    <property type="molecule type" value="protein"/>
</dbReference>
<dbReference type="Bgee" id="ENSMUSG00000035473">
    <property type="expression patterns" value="Expressed in olfactory epithelium and 227 other cell types or tissues"/>
</dbReference>
<dbReference type="ExpressionAtlas" id="Q8K157">
    <property type="expression patterns" value="baseline and differential"/>
</dbReference>
<dbReference type="GO" id="GO:0005737">
    <property type="term" value="C:cytoplasm"/>
    <property type="evidence" value="ECO:0007669"/>
    <property type="project" value="UniProtKB-SubCell"/>
</dbReference>
<dbReference type="GO" id="GO:0004034">
    <property type="term" value="F:aldose 1-epimerase activity"/>
    <property type="evidence" value="ECO:0000266"/>
    <property type="project" value="MGI"/>
</dbReference>
<dbReference type="GO" id="GO:0030246">
    <property type="term" value="F:carbohydrate binding"/>
    <property type="evidence" value="ECO:0007669"/>
    <property type="project" value="InterPro"/>
</dbReference>
<dbReference type="GO" id="GO:0005975">
    <property type="term" value="P:carbohydrate metabolic process"/>
    <property type="evidence" value="ECO:0000266"/>
    <property type="project" value="MGI"/>
</dbReference>
<dbReference type="GO" id="GO:0033499">
    <property type="term" value="P:galactose catabolic process via UDP-galactose, Leloir pathway"/>
    <property type="evidence" value="ECO:0000266"/>
    <property type="project" value="MGI"/>
</dbReference>
<dbReference type="GO" id="GO:0006006">
    <property type="term" value="P:glucose metabolic process"/>
    <property type="evidence" value="ECO:0007669"/>
    <property type="project" value="Ensembl"/>
</dbReference>
<dbReference type="CDD" id="cd09019">
    <property type="entry name" value="galactose_mutarotase_like"/>
    <property type="match status" value="1"/>
</dbReference>
<dbReference type="FunFam" id="2.70.98.10:FF:000003">
    <property type="entry name" value="Aldose 1-epimerase"/>
    <property type="match status" value="1"/>
</dbReference>
<dbReference type="Gene3D" id="2.70.98.10">
    <property type="match status" value="1"/>
</dbReference>
<dbReference type="InterPro" id="IPR018052">
    <property type="entry name" value="Ald1_epimerase_CS"/>
</dbReference>
<dbReference type="InterPro" id="IPR015443">
    <property type="entry name" value="Aldose_1-epimerase"/>
</dbReference>
<dbReference type="InterPro" id="IPR008183">
    <property type="entry name" value="Aldose_1/G6P_1-epimerase"/>
</dbReference>
<dbReference type="InterPro" id="IPR011013">
    <property type="entry name" value="Gal_mutarotase_sf_dom"/>
</dbReference>
<dbReference type="InterPro" id="IPR047215">
    <property type="entry name" value="Galactose_mutarotase-like"/>
</dbReference>
<dbReference type="InterPro" id="IPR014718">
    <property type="entry name" value="GH-type_carb-bd"/>
</dbReference>
<dbReference type="NCBIfam" id="NF008277">
    <property type="entry name" value="PRK11055.1"/>
    <property type="match status" value="1"/>
</dbReference>
<dbReference type="PANTHER" id="PTHR10091">
    <property type="entry name" value="ALDOSE-1-EPIMERASE"/>
    <property type="match status" value="1"/>
</dbReference>
<dbReference type="PANTHER" id="PTHR10091:SF0">
    <property type="entry name" value="GALACTOSE MUTAROTASE"/>
    <property type="match status" value="1"/>
</dbReference>
<dbReference type="Pfam" id="PF01263">
    <property type="entry name" value="Aldose_epim"/>
    <property type="match status" value="1"/>
</dbReference>
<dbReference type="PIRSF" id="PIRSF005096">
    <property type="entry name" value="GALM"/>
    <property type="match status" value="1"/>
</dbReference>
<dbReference type="SUPFAM" id="SSF74650">
    <property type="entry name" value="Galactose mutarotase-like"/>
    <property type="match status" value="1"/>
</dbReference>
<dbReference type="PROSITE" id="PS00545">
    <property type="entry name" value="ALDOSE_1_EPIMERASE"/>
    <property type="match status" value="1"/>
</dbReference>
<protein>
    <recommendedName>
        <fullName>Galactose mutarotase</fullName>
        <ecNumber evidence="1">5.1.3.3</ecNumber>
    </recommendedName>
    <alternativeName>
        <fullName>Aldose 1-epimerase</fullName>
    </alternativeName>
</protein>
<comment type="function">
    <text evidence="1">Mutarotase that catalyzes the interconversion of beta-D-galactose and alpha-D-galactose during galactose metabolism. Beta-D-galactose is metabolized in the liver into glucose 1-phosphate, the primary metabolic fuel, by the action of four enzymes that constitute the Leloir pathway: GALM, GALK1 (galactokinase), GALT (galactose-1-phosphate uridylyltransferase) and GALE (UDP-galactose-4'-epimerase). Involved in the maintenance of the equilibrium between the beta- and alpha-anomers of galactose, therefore ensuring a sufficient supply of the alpha-anomer for GALK1. Also active on D-glucose although shows a preference for galactose over glucose.</text>
</comment>
<comment type="catalytic activity">
    <reaction evidence="1">
        <text>alpha-D-galactose = beta-D-galactose</text>
        <dbReference type="Rhea" id="RHEA:28675"/>
        <dbReference type="ChEBI" id="CHEBI:27667"/>
        <dbReference type="ChEBI" id="CHEBI:28061"/>
        <dbReference type="EC" id="5.1.3.3"/>
    </reaction>
    <physiologicalReaction direction="right-to-left" evidence="1">
        <dbReference type="Rhea" id="RHEA:28677"/>
    </physiologicalReaction>
</comment>
<comment type="catalytic activity">
    <reaction evidence="1">
        <text>alpha-D-glucose = beta-D-glucose</text>
        <dbReference type="Rhea" id="RHEA:10264"/>
        <dbReference type="ChEBI" id="CHEBI:15903"/>
        <dbReference type="ChEBI" id="CHEBI:17925"/>
        <dbReference type="EC" id="5.1.3.3"/>
    </reaction>
</comment>
<comment type="pathway">
    <text evidence="1">Carbohydrate metabolism; hexose metabolism.</text>
</comment>
<comment type="pathway">
    <text evidence="1">Carbohydrate metabolism; galactose metabolism.</text>
</comment>
<comment type="subunit">
    <text evidence="1">Monomer.</text>
</comment>
<comment type="subcellular location">
    <subcellularLocation>
        <location evidence="2">Cytoplasm</location>
    </subcellularLocation>
</comment>
<comment type="similarity">
    <text evidence="2">Belongs to the aldose epimerase family.</text>
</comment>
<evidence type="ECO:0000250" key="1">
    <source>
        <dbReference type="UniProtKB" id="Q96C23"/>
    </source>
</evidence>
<evidence type="ECO:0000305" key="2"/>
<evidence type="ECO:0000312" key="3">
    <source>
        <dbReference type="MGI" id="MGI:2442420"/>
    </source>
</evidence>
<sequence length="342" mass="37799">MVSVTRTVFGELPSGGGTVEKFQLRSDQLSVDIISWGCTITALQVKDRQGKASDVVLGFAELEGYLQKQPYFGAVVGRVANRIAKGRFTIGGKEYHLPVNREPNSLHGGFTGFDKVLWTPQVLTNGVQFFRVSPDGEEGYPGELKVWVTYTLDGGELVINYRAQASQTTPVNLTNHSYFNLAGQGSPNIYDHEVTIAADAYLPVDETLIPTGVIAPVEGTAFDLRKPVELGTHLQDYHIHGFDHNFCLKESKEKKFCARVRHAASGRILEVYTTQPGVQFYTGNFLDGTLKGKNGAVYPKHSGLCLETQNWPDSVNQPQFPPALLRPGEEYNHTTWFKFSVA</sequence>
<keyword id="KW-0119">Carbohydrate metabolism</keyword>
<keyword id="KW-0963">Cytoplasm</keyword>
<keyword id="KW-0413">Isomerase</keyword>
<keyword id="KW-0597">Phosphoprotein</keyword>
<keyword id="KW-1185">Reference proteome</keyword>
<organism>
    <name type="scientific">Mus musculus</name>
    <name type="common">Mouse</name>
    <dbReference type="NCBI Taxonomy" id="10090"/>
    <lineage>
        <taxon>Eukaryota</taxon>
        <taxon>Metazoa</taxon>
        <taxon>Chordata</taxon>
        <taxon>Craniata</taxon>
        <taxon>Vertebrata</taxon>
        <taxon>Euteleostomi</taxon>
        <taxon>Mammalia</taxon>
        <taxon>Eutheria</taxon>
        <taxon>Euarchontoglires</taxon>
        <taxon>Glires</taxon>
        <taxon>Rodentia</taxon>
        <taxon>Myomorpha</taxon>
        <taxon>Muroidea</taxon>
        <taxon>Muridae</taxon>
        <taxon>Murinae</taxon>
        <taxon>Mus</taxon>
        <taxon>Mus</taxon>
    </lineage>
</organism>
<accession>Q8K157</accession>
<name>GALM_MOUSE</name>
<feature type="initiator methionine" description="Removed" evidence="1">
    <location>
        <position position="1"/>
    </location>
</feature>
<feature type="chain" id="PRO_0000197434" description="Galactose mutarotase">
    <location>
        <begin position="2"/>
        <end position="342"/>
    </location>
</feature>
<feature type="active site" description="Proton donor" evidence="1">
    <location>
        <position position="176"/>
    </location>
</feature>
<feature type="active site" description="Proton acceptor" evidence="1">
    <location>
        <position position="307"/>
    </location>
</feature>
<feature type="binding site" evidence="1">
    <location>
        <begin position="81"/>
        <end position="82"/>
    </location>
    <ligand>
        <name>beta-D-galactose</name>
        <dbReference type="ChEBI" id="CHEBI:27667"/>
    </ligand>
</feature>
<feature type="binding site" evidence="1">
    <location>
        <position position="107"/>
    </location>
    <ligand>
        <name>beta-D-galactose</name>
        <dbReference type="ChEBI" id="CHEBI:27667"/>
    </ligand>
</feature>
<feature type="binding site" evidence="1">
    <location>
        <begin position="176"/>
        <end position="178"/>
    </location>
    <ligand>
        <name>beta-D-galactose</name>
        <dbReference type="ChEBI" id="CHEBI:27667"/>
    </ligand>
</feature>
<feature type="binding site" evidence="1">
    <location>
        <position position="243"/>
    </location>
    <ligand>
        <name>beta-D-galactose</name>
        <dbReference type="ChEBI" id="CHEBI:27667"/>
    </ligand>
</feature>
<feature type="binding site" evidence="1">
    <location>
        <position position="279"/>
    </location>
    <ligand>
        <name>beta-D-galactose</name>
        <dbReference type="ChEBI" id="CHEBI:27667"/>
    </ligand>
</feature>
<feature type="binding site" evidence="1">
    <location>
        <position position="307"/>
    </location>
    <ligand>
        <name>beta-D-galactose</name>
        <dbReference type="ChEBI" id="CHEBI:27667"/>
    </ligand>
</feature>
<feature type="modified residue" description="Phosphoserine" evidence="1">
    <location>
        <position position="14"/>
    </location>
</feature>
<gene>
    <name evidence="3" type="primary">Galm</name>
</gene>